<organism>
    <name type="scientific">Streptococcus gordonii (strain Challis / ATCC 35105 / BCRC 15272 / CH1 / DL1 / V288)</name>
    <dbReference type="NCBI Taxonomy" id="467705"/>
    <lineage>
        <taxon>Bacteria</taxon>
        <taxon>Bacillati</taxon>
        <taxon>Bacillota</taxon>
        <taxon>Bacilli</taxon>
        <taxon>Lactobacillales</taxon>
        <taxon>Streptococcaceae</taxon>
        <taxon>Streptococcus</taxon>
    </lineage>
</organism>
<proteinExistence type="inferred from homology"/>
<comment type="function">
    <text evidence="1">Located at the top of the head of the 30S subunit, it contacts several helices of the 16S rRNA. In the 70S ribosome it contacts the 23S rRNA (bridge B1a) and protein L5 of the 50S subunit (bridge B1b), connecting the 2 subunits; these bridges are implicated in subunit movement. Contacts the tRNAs in the A and P-sites.</text>
</comment>
<comment type="subunit">
    <text evidence="1">Part of the 30S ribosomal subunit. Forms a loose heterodimer with protein S19. Forms two bridges to the 50S subunit in the 70S ribosome.</text>
</comment>
<comment type="similarity">
    <text evidence="1">Belongs to the universal ribosomal protein uS13 family.</text>
</comment>
<accession>A8AZK1</accession>
<protein>
    <recommendedName>
        <fullName evidence="1">Small ribosomal subunit protein uS13</fullName>
    </recommendedName>
    <alternativeName>
        <fullName evidence="3">30S ribosomal protein S13</fullName>
    </alternativeName>
</protein>
<evidence type="ECO:0000255" key="1">
    <source>
        <dbReference type="HAMAP-Rule" id="MF_01315"/>
    </source>
</evidence>
<evidence type="ECO:0000256" key="2">
    <source>
        <dbReference type="SAM" id="MobiDB-lite"/>
    </source>
</evidence>
<evidence type="ECO:0000305" key="3"/>
<name>RS13_STRGC</name>
<keyword id="KW-1185">Reference proteome</keyword>
<keyword id="KW-0687">Ribonucleoprotein</keyword>
<keyword id="KW-0689">Ribosomal protein</keyword>
<keyword id="KW-0694">RNA-binding</keyword>
<keyword id="KW-0699">rRNA-binding</keyword>
<keyword id="KW-0820">tRNA-binding</keyword>
<gene>
    <name evidence="1" type="primary">rpsM</name>
    <name type="ordered locus">SGO_1961</name>
</gene>
<dbReference type="EMBL" id="CP000725">
    <property type="protein sequence ID" value="ABV09206.1"/>
    <property type="molecule type" value="Genomic_DNA"/>
</dbReference>
<dbReference type="RefSeq" id="WP_008809894.1">
    <property type="nucleotide sequence ID" value="NC_009785.1"/>
</dbReference>
<dbReference type="SMR" id="A8AZK1"/>
<dbReference type="STRING" id="467705.SGO_1961"/>
<dbReference type="GeneID" id="93786866"/>
<dbReference type="KEGG" id="sgo:SGO_1961"/>
<dbReference type="eggNOG" id="COG0099">
    <property type="taxonomic scope" value="Bacteria"/>
</dbReference>
<dbReference type="HOGENOM" id="CLU_103849_1_1_9"/>
<dbReference type="Proteomes" id="UP000001131">
    <property type="component" value="Chromosome"/>
</dbReference>
<dbReference type="GO" id="GO:0005829">
    <property type="term" value="C:cytosol"/>
    <property type="evidence" value="ECO:0007669"/>
    <property type="project" value="TreeGrafter"/>
</dbReference>
<dbReference type="GO" id="GO:0015935">
    <property type="term" value="C:small ribosomal subunit"/>
    <property type="evidence" value="ECO:0007669"/>
    <property type="project" value="TreeGrafter"/>
</dbReference>
<dbReference type="GO" id="GO:0019843">
    <property type="term" value="F:rRNA binding"/>
    <property type="evidence" value="ECO:0007669"/>
    <property type="project" value="UniProtKB-UniRule"/>
</dbReference>
<dbReference type="GO" id="GO:0003735">
    <property type="term" value="F:structural constituent of ribosome"/>
    <property type="evidence" value="ECO:0007669"/>
    <property type="project" value="InterPro"/>
</dbReference>
<dbReference type="GO" id="GO:0000049">
    <property type="term" value="F:tRNA binding"/>
    <property type="evidence" value="ECO:0007669"/>
    <property type="project" value="UniProtKB-UniRule"/>
</dbReference>
<dbReference type="GO" id="GO:0006412">
    <property type="term" value="P:translation"/>
    <property type="evidence" value="ECO:0007669"/>
    <property type="project" value="UniProtKB-UniRule"/>
</dbReference>
<dbReference type="FunFam" id="1.10.8.50:FF:000001">
    <property type="entry name" value="30S ribosomal protein S13"/>
    <property type="match status" value="1"/>
</dbReference>
<dbReference type="FunFam" id="4.10.910.10:FF:000001">
    <property type="entry name" value="30S ribosomal protein S13"/>
    <property type="match status" value="1"/>
</dbReference>
<dbReference type="Gene3D" id="1.10.8.50">
    <property type="match status" value="1"/>
</dbReference>
<dbReference type="Gene3D" id="4.10.910.10">
    <property type="entry name" value="30s ribosomal protein s13, domain 2"/>
    <property type="match status" value="1"/>
</dbReference>
<dbReference type="HAMAP" id="MF_01315">
    <property type="entry name" value="Ribosomal_uS13"/>
    <property type="match status" value="1"/>
</dbReference>
<dbReference type="InterPro" id="IPR027437">
    <property type="entry name" value="Rbsml_uS13_C"/>
</dbReference>
<dbReference type="InterPro" id="IPR001892">
    <property type="entry name" value="Ribosomal_uS13"/>
</dbReference>
<dbReference type="InterPro" id="IPR010979">
    <property type="entry name" value="Ribosomal_uS13-like_H2TH"/>
</dbReference>
<dbReference type="InterPro" id="IPR019980">
    <property type="entry name" value="Ribosomal_uS13_bac-type"/>
</dbReference>
<dbReference type="InterPro" id="IPR018269">
    <property type="entry name" value="Ribosomal_uS13_CS"/>
</dbReference>
<dbReference type="NCBIfam" id="TIGR03631">
    <property type="entry name" value="uS13_bact"/>
    <property type="match status" value="1"/>
</dbReference>
<dbReference type="PANTHER" id="PTHR10871">
    <property type="entry name" value="30S RIBOSOMAL PROTEIN S13/40S RIBOSOMAL PROTEIN S18"/>
    <property type="match status" value="1"/>
</dbReference>
<dbReference type="PANTHER" id="PTHR10871:SF1">
    <property type="entry name" value="SMALL RIBOSOMAL SUBUNIT PROTEIN US13M"/>
    <property type="match status" value="1"/>
</dbReference>
<dbReference type="Pfam" id="PF00416">
    <property type="entry name" value="Ribosomal_S13"/>
    <property type="match status" value="1"/>
</dbReference>
<dbReference type="PIRSF" id="PIRSF002134">
    <property type="entry name" value="Ribosomal_S13"/>
    <property type="match status" value="1"/>
</dbReference>
<dbReference type="SUPFAM" id="SSF46946">
    <property type="entry name" value="S13-like H2TH domain"/>
    <property type="match status" value="1"/>
</dbReference>
<dbReference type="PROSITE" id="PS00646">
    <property type="entry name" value="RIBOSOMAL_S13_1"/>
    <property type="match status" value="1"/>
</dbReference>
<dbReference type="PROSITE" id="PS50159">
    <property type="entry name" value="RIBOSOMAL_S13_2"/>
    <property type="match status" value="1"/>
</dbReference>
<sequence>MARIAGVDIPNDKRVVVSLTYVYGIGLPTSKKILAAAGVSEDVRVKDLTPDQEDAIRREVDAIKVEGDLRREVNLNIKRLMEIGSYRGIRHRRGLPVRGQNTKNNARTRKGKAVAIAGKKK</sequence>
<feature type="chain" id="PRO_1000086266" description="Small ribosomal subunit protein uS13">
    <location>
        <begin position="1"/>
        <end position="121"/>
    </location>
</feature>
<feature type="region of interest" description="Disordered" evidence="2">
    <location>
        <begin position="96"/>
        <end position="121"/>
    </location>
</feature>
<feature type="compositionally biased region" description="Basic residues" evidence="2">
    <location>
        <begin position="106"/>
        <end position="121"/>
    </location>
</feature>
<reference key="1">
    <citation type="journal article" date="2007" name="J. Bacteriol.">
        <title>Genome-wide transcriptional changes in Streptococcus gordonii in response to competence signaling peptide.</title>
        <authorList>
            <person name="Vickerman M.M."/>
            <person name="Iobst S."/>
            <person name="Jesionowski A.M."/>
            <person name="Gill S.R."/>
        </authorList>
    </citation>
    <scope>NUCLEOTIDE SEQUENCE [LARGE SCALE GENOMIC DNA]</scope>
    <source>
        <strain>Challis / ATCC 35105 / BCRC 15272 / CH1 / DL1 / V288</strain>
    </source>
</reference>